<comment type="subcellular location">
    <subcellularLocation>
        <location evidence="2">Nucleus</location>
    </subcellularLocation>
</comment>
<keyword id="KW-0238">DNA-binding</keyword>
<keyword id="KW-0371">Homeobox</keyword>
<keyword id="KW-0539">Nucleus</keyword>
<keyword id="KW-1185">Reference proteome</keyword>
<dbReference type="EMBL" id="M85302">
    <property type="protein sequence ID" value="AAA29931.1"/>
    <property type="molecule type" value="mRNA"/>
</dbReference>
<dbReference type="SMR" id="Q26603"/>
<dbReference type="STRING" id="6183.Q26603"/>
<dbReference type="eggNOG" id="KOG0489">
    <property type="taxonomic scope" value="Eukaryota"/>
</dbReference>
<dbReference type="HOGENOM" id="CLU_2136565_0_0_1"/>
<dbReference type="InParanoid" id="Q26603"/>
<dbReference type="Proteomes" id="UP000008854">
    <property type="component" value="Unassembled WGS sequence"/>
</dbReference>
<dbReference type="GO" id="GO:0005634">
    <property type="term" value="C:nucleus"/>
    <property type="evidence" value="ECO:0007669"/>
    <property type="project" value="UniProtKB-SubCell"/>
</dbReference>
<dbReference type="GO" id="GO:0003677">
    <property type="term" value="F:DNA binding"/>
    <property type="evidence" value="ECO:0007669"/>
    <property type="project" value="UniProtKB-KW"/>
</dbReference>
<dbReference type="GO" id="GO:0000981">
    <property type="term" value="F:DNA-binding transcription factor activity, RNA polymerase II-specific"/>
    <property type="evidence" value="ECO:0007669"/>
    <property type="project" value="InterPro"/>
</dbReference>
<dbReference type="CDD" id="cd00086">
    <property type="entry name" value="homeodomain"/>
    <property type="match status" value="1"/>
</dbReference>
<dbReference type="Gene3D" id="1.10.10.60">
    <property type="entry name" value="Homeodomain-like"/>
    <property type="match status" value="1"/>
</dbReference>
<dbReference type="InterPro" id="IPR001356">
    <property type="entry name" value="HD"/>
</dbReference>
<dbReference type="InterPro" id="IPR020479">
    <property type="entry name" value="HD_metazoa"/>
</dbReference>
<dbReference type="InterPro" id="IPR017970">
    <property type="entry name" value="Homeobox_CS"/>
</dbReference>
<dbReference type="InterPro" id="IPR050848">
    <property type="entry name" value="Homeobox_TF"/>
</dbReference>
<dbReference type="InterPro" id="IPR009057">
    <property type="entry name" value="Homeodomain-like_sf"/>
</dbReference>
<dbReference type="PANTHER" id="PTHR24333">
    <property type="entry name" value="HOMEO BOX HB9 LIKE A-RELATED"/>
    <property type="match status" value="1"/>
</dbReference>
<dbReference type="PANTHER" id="PTHR24333:SF5">
    <property type="entry name" value="VENT HOMEOBOX"/>
    <property type="match status" value="1"/>
</dbReference>
<dbReference type="Pfam" id="PF00046">
    <property type="entry name" value="Homeodomain"/>
    <property type="match status" value="1"/>
</dbReference>
<dbReference type="PRINTS" id="PR00024">
    <property type="entry name" value="HOMEOBOX"/>
</dbReference>
<dbReference type="SMART" id="SM00389">
    <property type="entry name" value="HOX"/>
    <property type="match status" value="1"/>
</dbReference>
<dbReference type="SUPFAM" id="SSF46689">
    <property type="entry name" value="Homeodomain-like"/>
    <property type="match status" value="1"/>
</dbReference>
<dbReference type="PROSITE" id="PS00027">
    <property type="entry name" value="HOMEOBOX_1"/>
    <property type="match status" value="1"/>
</dbReference>
<dbReference type="PROSITE" id="PS50071">
    <property type="entry name" value="HOMEOBOX_2"/>
    <property type="match status" value="1"/>
</dbReference>
<reference key="1">
    <citation type="journal article" date="1992" name="Mech. Dev.">
        <title>Conserved classes of homeodomains in Schistosoma mansoni, an early bilateral metazoan.</title>
        <authorList>
            <person name="Webster P.J."/>
            <person name="Mansour T.E."/>
        </authorList>
    </citation>
    <scope>NUCLEOTIDE SEQUENCE [MRNA]</scope>
    <source>
        <strain>Puerto Rican</strain>
    </source>
</reference>
<proteinExistence type="evidence at transcript level"/>
<organism>
    <name type="scientific">Schistosoma mansoni</name>
    <name type="common">Blood fluke</name>
    <dbReference type="NCBI Taxonomy" id="6183"/>
    <lineage>
        <taxon>Eukaryota</taxon>
        <taxon>Metazoa</taxon>
        <taxon>Spiralia</taxon>
        <taxon>Lophotrochozoa</taxon>
        <taxon>Platyhelminthes</taxon>
        <taxon>Trematoda</taxon>
        <taxon>Digenea</taxon>
        <taxon>Strigeidida</taxon>
        <taxon>Schistosomatoidea</taxon>
        <taxon>Schistosomatidae</taxon>
        <taxon>Schistosoma</taxon>
    </lineage>
</organism>
<accession>Q26603</accession>
<name>SMOX4_SCHMA</name>
<evidence type="ECO:0000255" key="1">
    <source>
        <dbReference type="PROSITE-ProRule" id="PRU00108"/>
    </source>
</evidence>
<evidence type="ECO:0000305" key="2"/>
<sequence>NHHLNNNIEYSDDKENCLNESLEYNHQIKLNKQNQNSFRNRTAFTDYQLICLEREFSHIQYLSRIDRIHLAQNLNLTEKQVKIWFQNRRVRWRKRNLF</sequence>
<protein>
    <recommendedName>
        <fullName>Homeobox protein SMOX-4</fullName>
    </recommendedName>
</protein>
<feature type="chain" id="PRO_0000049312" description="Homeobox protein SMOX-4">
    <location>
        <begin position="1" status="less than"/>
        <end position="98"/>
    </location>
</feature>
<feature type="DNA-binding region" description="Homeobox" evidence="1">
    <location>
        <begin position="37"/>
        <end position="96"/>
    </location>
</feature>
<feature type="non-terminal residue">
    <location>
        <position position="1"/>
    </location>
</feature>
<gene>
    <name type="primary">SMOX-4</name>
</gene>